<proteinExistence type="evidence at protein level"/>
<gene>
    <name evidence="22" type="primary">par-1</name>
    <name type="ORF">H39E23.1</name>
</gene>
<accession>Q9TW45</accession>
<accession>B1Q266</accession>
<accession>E0AHE2</accession>
<accession>E0AHE3</accession>
<accession>E1B6W1</accession>
<accession>G5EE60</accession>
<accession>G5EE76</accession>
<accession>H2L2K6</accession>
<accession>H2L2K7</accession>
<accession>N1NTJ6</accession>
<accession>Q17346</accession>
<accession>Q17368</accession>
<accession>Q1ZXR3</accession>
<accession>Q9TVG6</accession>
<protein>
    <recommendedName>
        <fullName evidence="16 22">Serine/threonine-protein kinase par-1</fullName>
        <ecNumber>2.7.11.1</ecNumber>
    </recommendedName>
</protein>
<name>PAR1_CAEEL</name>
<comment type="function">
    <text evidence="8 9 10 11 14">Required for cytoplasmic partitioning and asymmetric cell division in early embryogenesis (PubMed:7758115). Phosphorylates and restricts the asymmetry effector mex-5 (and possibly also mex-6) to the anterior cytoplasm of the zygote (PubMed:18842813). Regulates mes-1 expression during early embryogenesis (PubMed:11003841). Critical role in postembryonic vulval morphogenesis (PubMed:12490197). Involved in the establishment of neuronal polarity (PubMed:20023164).</text>
</comment>
<comment type="catalytic activity">
    <reaction evidence="2">
        <text>L-seryl-[protein] + ATP = O-phospho-L-seryl-[protein] + ADP + H(+)</text>
        <dbReference type="Rhea" id="RHEA:17989"/>
        <dbReference type="Rhea" id="RHEA-COMP:9863"/>
        <dbReference type="Rhea" id="RHEA-COMP:11604"/>
        <dbReference type="ChEBI" id="CHEBI:15378"/>
        <dbReference type="ChEBI" id="CHEBI:29999"/>
        <dbReference type="ChEBI" id="CHEBI:30616"/>
        <dbReference type="ChEBI" id="CHEBI:83421"/>
        <dbReference type="ChEBI" id="CHEBI:456216"/>
        <dbReference type="EC" id="2.7.11.1"/>
    </reaction>
</comment>
<comment type="catalytic activity">
    <reaction evidence="2">
        <text>L-threonyl-[protein] + ATP = O-phospho-L-threonyl-[protein] + ADP + H(+)</text>
        <dbReference type="Rhea" id="RHEA:46608"/>
        <dbReference type="Rhea" id="RHEA-COMP:11060"/>
        <dbReference type="Rhea" id="RHEA-COMP:11605"/>
        <dbReference type="ChEBI" id="CHEBI:15378"/>
        <dbReference type="ChEBI" id="CHEBI:30013"/>
        <dbReference type="ChEBI" id="CHEBI:30616"/>
        <dbReference type="ChEBI" id="CHEBI:61977"/>
        <dbReference type="ChEBI" id="CHEBI:456216"/>
        <dbReference type="EC" id="2.7.11.1"/>
    </reaction>
</comment>
<comment type="cofactor">
    <cofactor evidence="2">
        <name>Mg(2+)</name>
        <dbReference type="ChEBI" id="CHEBI:18420"/>
    </cofactor>
</comment>
<comment type="interaction">
    <interactant intactId="EBI-1811687">
        <id>Q9TW45</id>
    </interactant>
    <interactant intactId="EBI-1811800">
        <id>Q21341</id>
        <label>let-99</label>
    </interactant>
    <organismsDiffer>false</organismsDiffer>
    <experiments>2</experiments>
</comment>
<comment type="subcellular location">
    <subcellularLocation>
        <location evidence="14">Cytoplasm</location>
        <location evidence="14">Cell cortex</location>
    </subcellularLocation>
    <text evidence="14">Colocalizes with germ granules (P granules).</text>
</comment>
<comment type="alternative products">
    <event type="alternative splicing"/>
    <isoform>
        <id>Q9TW45-1</id>
        <name evidence="14 15">a</name>
        <sequence type="displayed"/>
    </isoform>
    <isoform>
        <id>Q9TW45-2</id>
        <name evidence="15">b</name>
        <sequence type="described" ref="VSP_053142 VSP_053143 VSP_053146"/>
    </isoform>
    <isoform>
        <id>Q9TW45-3</id>
        <name evidence="15">c</name>
        <sequence type="described" ref="VSP_053140 VSP_053145"/>
    </isoform>
    <isoform>
        <id>Q9TW45-4</id>
        <name evidence="15">d</name>
        <sequence type="described" ref="VSP_053141 VSP_053144 VSP_053148"/>
    </isoform>
    <isoform>
        <id>Q9TW45-5</id>
        <name>e</name>
        <sequence type="described" ref="VSP_053141 VSP_053144 VSP_053642 VSP_053644"/>
    </isoform>
    <isoform>
        <id>Q9TW45-6</id>
        <name>f</name>
        <sequence type="described" ref="VSP_053638"/>
    </isoform>
    <isoform>
        <id>Q9TW45-7</id>
        <name>g</name>
        <sequence type="described" ref="VSP_053637"/>
    </isoform>
    <isoform>
        <id>Q9TW45-8</id>
        <name>h</name>
        <sequence type="described" ref="VSP_053636"/>
    </isoform>
    <isoform>
        <id>Q9TW45-9</id>
        <name>i</name>
        <sequence type="described" ref="VSP_053634 VSP_053643"/>
    </isoform>
    <isoform>
        <id>Q9TW45-10</id>
        <name>j</name>
        <sequence type="described" ref="VSP_053641"/>
    </isoform>
    <isoform>
        <id>Q9TW45-11</id>
        <name>k</name>
        <sequence type="described" ref="VSP_053635"/>
    </isoform>
    <isoform>
        <id>Q9TW45-12</id>
        <name>l</name>
        <sequence type="described" ref="VSP_053639 VSP_053640"/>
    </isoform>
</comment>
<comment type="tissue specificity">
    <text evidence="14">Asymmetrically localized to the posterior of the zygote before mitotic division, then differentially distributed to the germline precursor cells (at protein level).</text>
</comment>
<comment type="developmental stage">
    <text evidence="14">Maternally expressed.</text>
</comment>
<comment type="PTM">
    <text evidence="12">Phosphorylated at Thr-325 probably by par-4.</text>
</comment>
<comment type="disruption phenotype">
    <text evidence="9 13">Maternal effect lethality. Blastomeres cleave synchronously until the fourth or fifth round, when synchrony breaks down. Cells also fail to segregate P granules. Terminal stage embryos fail to produce intestinal cells. Disruption post-hatching results in a protruding vulva, the two mirror-symmetric halves of the vulva fail to join into a single, coherent organ.</text>
</comment>
<comment type="similarity">
    <text evidence="19">Belongs to the protein kinase superfamily. CAMK Ser/Thr protein kinase family. SNF1 subfamily.</text>
</comment>
<organism>
    <name type="scientific">Caenorhabditis elegans</name>
    <dbReference type="NCBI Taxonomy" id="6239"/>
    <lineage>
        <taxon>Eukaryota</taxon>
        <taxon>Metazoa</taxon>
        <taxon>Ecdysozoa</taxon>
        <taxon>Nematoda</taxon>
        <taxon>Chromadorea</taxon>
        <taxon>Rhabditida</taxon>
        <taxon>Rhabditina</taxon>
        <taxon>Rhabditomorpha</taxon>
        <taxon>Rhabditoidea</taxon>
        <taxon>Rhabditidae</taxon>
        <taxon>Peloderinae</taxon>
        <taxon>Caenorhabditis</taxon>
    </lineage>
</organism>
<reference evidence="19 21" key="1">
    <citation type="journal article" date="1995" name="Cell">
        <title>par-1, a gene required for establishing polarity in C. elegans embryos, encodes a putative Ser/Thr kinase that is asymmetrically distributed.</title>
        <authorList>
            <person name="Guo S."/>
            <person name="Kemphues K.J."/>
        </authorList>
    </citation>
    <scope>NUCLEOTIDE SEQUENCE [MRNA] (ISOFORM A)</scope>
    <scope>FUNCTION</scope>
    <scope>SUBCELLULAR LOCATION</scope>
    <scope>TISSUE SPECIFICITY</scope>
    <scope>DEVELOPMENTAL STAGE</scope>
    <source>
        <strain evidence="21">Bristol N2</strain>
    </source>
</reference>
<reference evidence="19 20" key="2">
    <citation type="submission" date="1995-11" db="EMBL/GenBank/DDBJ databases">
        <authorList>
            <person name="Winge P."/>
            <person name="Fleming J.T."/>
            <person name="Goebel V."/>
        </authorList>
    </citation>
    <scope>NUCLEOTIDE SEQUENCE [MRNA] (ISOFORM B)</scope>
    <source>
        <strain evidence="20">Bristol N2</strain>
    </source>
</reference>
<reference evidence="22" key="3">
    <citation type="journal article" date="1998" name="Science">
        <title>Genome sequence of the nematode C. elegans: a platform for investigating biology.</title>
        <authorList>
            <consortium name="The C. elegans sequencing consortium"/>
        </authorList>
    </citation>
    <scope>NUCLEOTIDE SEQUENCE [LARGE SCALE GENOMIC DNA]</scope>
    <scope>ALTERNATIVE SPLICING</scope>
    <source>
        <strain>Bristol N2</strain>
    </source>
</reference>
<reference evidence="19" key="4">
    <citation type="journal article" date="1988" name="Cell">
        <title>Identification of genes required for cytoplasmic localization in early C. elegans embryos.</title>
        <authorList>
            <person name="Kemphues K.J."/>
            <person name="Priess J.R."/>
            <person name="Morton D.G."/>
            <person name="Cheng N.S."/>
        </authorList>
    </citation>
    <scope>DISRUPTION PHENOTYPE</scope>
</reference>
<reference key="5">
    <citation type="journal article" date="2000" name="Development">
        <title>MES-1, a protein required for unequal divisions of the germline in early C. elegans embryos, resembles receptor tyrosine kinases and is localized to the boundary between the germline and gut cells.</title>
        <authorList>
            <person name="Berkowitz L.A."/>
            <person name="Strome S."/>
        </authorList>
    </citation>
    <scope>FUNCTION</scope>
</reference>
<reference key="6">
    <citation type="journal article" date="2003" name="Dev. Biol.">
        <title>PAR-1 is required for morphogenesis of the Caenorhabditis elegans vulva.</title>
        <authorList>
            <person name="Hurd D.D."/>
            <person name="Kemphues K.J."/>
        </authorList>
    </citation>
    <scope>FUNCTION</scope>
    <scope>DISRUPTION PHENOTYPE</scope>
</reference>
<reference key="7">
    <citation type="journal article" date="2008" name="Development">
        <title>MEX-5 asymmetry in one-cell C. elegans embryos requires PAR-4- and PAR-1-dependent phosphorylation.</title>
        <authorList>
            <person name="Tenlen J.R."/>
            <person name="Molk J.N."/>
            <person name="London N."/>
            <person name="Page B.D."/>
            <person name="Priess J.R."/>
        </authorList>
    </citation>
    <scope>FUNCTION</scope>
</reference>
<reference key="8">
    <citation type="journal article" date="2010" name="Development">
        <title>C. elegans STRADalpha and SAD cooperatively regulate neuronal polarity and synaptic organization.</title>
        <authorList>
            <person name="Kim J.S."/>
            <person name="Hung W."/>
            <person name="Narbonne P."/>
            <person name="Roy R."/>
            <person name="Zhen M."/>
        </authorList>
    </citation>
    <scope>FUNCTION</scope>
</reference>
<reference key="9">
    <citation type="journal article" date="2010" name="Development">
        <title>Differential requirements for STRAD in LKB1-dependent functions in C. elegans.</title>
        <authorList>
            <person name="Narbonne P."/>
            <person name="Hyenne V."/>
            <person name="Li S."/>
            <person name="Labbe J.C."/>
            <person name="Roy R."/>
        </authorList>
    </citation>
    <scope>PHOSPHORYLATION AT THR-325</scope>
</reference>
<evidence type="ECO:0000250" key="1">
    <source>
        <dbReference type="UniProtKB" id="P28523"/>
    </source>
</evidence>
<evidence type="ECO:0000250" key="2">
    <source>
        <dbReference type="UniProtKB" id="Q7KZI7"/>
    </source>
</evidence>
<evidence type="ECO:0000255" key="3">
    <source>
        <dbReference type="PROSITE-ProRule" id="PRU00159"/>
    </source>
</evidence>
<evidence type="ECO:0000255" key="4">
    <source>
        <dbReference type="PROSITE-ProRule" id="PRU00212"/>
    </source>
</evidence>
<evidence type="ECO:0000255" key="5">
    <source>
        <dbReference type="PROSITE-ProRule" id="PRU00565"/>
    </source>
</evidence>
<evidence type="ECO:0000255" key="6">
    <source>
        <dbReference type="PROSITE-ProRule" id="PRU10027"/>
    </source>
</evidence>
<evidence type="ECO:0000256" key="7">
    <source>
        <dbReference type="SAM" id="MobiDB-lite"/>
    </source>
</evidence>
<evidence type="ECO:0000269" key="8">
    <source>
    </source>
</evidence>
<evidence type="ECO:0000269" key="9">
    <source>
    </source>
</evidence>
<evidence type="ECO:0000269" key="10">
    <source>
    </source>
</evidence>
<evidence type="ECO:0000269" key="11">
    <source>
    </source>
</evidence>
<evidence type="ECO:0000269" key="12">
    <source>
    </source>
</evidence>
<evidence type="ECO:0000269" key="13">
    <source>
    </source>
</evidence>
<evidence type="ECO:0000269" key="14">
    <source>
    </source>
</evidence>
<evidence type="ECO:0000269" key="15">
    <source>
    </source>
</evidence>
<evidence type="ECO:0000303" key="16">
    <source>
    </source>
</evidence>
<evidence type="ECO:0000303" key="17">
    <source>
    </source>
</evidence>
<evidence type="ECO:0000303" key="18">
    <source ref="2"/>
</evidence>
<evidence type="ECO:0000305" key="19"/>
<evidence type="ECO:0000312" key="20">
    <source>
        <dbReference type="EMBL" id="AAA83272.1"/>
    </source>
</evidence>
<evidence type="ECO:0000312" key="21">
    <source>
        <dbReference type="EMBL" id="AAA97437.1"/>
    </source>
</evidence>
<evidence type="ECO:0000312" key="22">
    <source>
        <dbReference type="EMBL" id="CAB54263.1"/>
    </source>
</evidence>
<feature type="chain" id="PRO_0000383322" description="Serine/threonine-protein kinase par-1">
    <location>
        <begin position="1"/>
        <end position="1192"/>
    </location>
</feature>
<feature type="domain" description="Protein kinase" evidence="3">
    <location>
        <begin position="170"/>
        <end position="421"/>
    </location>
</feature>
<feature type="domain" description="UBA" evidence="4">
    <location>
        <begin position="440"/>
        <end position="482"/>
    </location>
</feature>
<feature type="domain" description="KA1" evidence="5">
    <location>
        <begin position="1143"/>
        <end position="1192"/>
    </location>
</feature>
<feature type="region of interest" description="Disordered" evidence="7">
    <location>
        <begin position="1"/>
        <end position="163"/>
    </location>
</feature>
<feature type="region of interest" description="Disordered" evidence="7">
    <location>
        <begin position="522"/>
        <end position="541"/>
    </location>
</feature>
<feature type="region of interest" description="Disordered" evidence="7">
    <location>
        <begin position="558"/>
        <end position="601"/>
    </location>
</feature>
<feature type="region of interest" description="Disordered" evidence="7">
    <location>
        <begin position="648"/>
        <end position="673"/>
    </location>
</feature>
<feature type="region of interest" description="Disordered" evidence="7">
    <location>
        <begin position="727"/>
        <end position="938"/>
    </location>
</feature>
<feature type="region of interest" description="Disordered" evidence="7">
    <location>
        <begin position="959"/>
        <end position="1052"/>
    </location>
</feature>
<feature type="compositionally biased region" description="Basic and acidic residues" evidence="7">
    <location>
        <begin position="24"/>
        <end position="36"/>
    </location>
</feature>
<feature type="compositionally biased region" description="Polar residues" evidence="7">
    <location>
        <begin position="46"/>
        <end position="62"/>
    </location>
</feature>
<feature type="compositionally biased region" description="Low complexity" evidence="7">
    <location>
        <begin position="106"/>
        <end position="151"/>
    </location>
</feature>
<feature type="compositionally biased region" description="Low complexity" evidence="7">
    <location>
        <begin position="525"/>
        <end position="541"/>
    </location>
</feature>
<feature type="compositionally biased region" description="Low complexity" evidence="7">
    <location>
        <begin position="558"/>
        <end position="598"/>
    </location>
</feature>
<feature type="compositionally biased region" description="Low complexity" evidence="7">
    <location>
        <begin position="648"/>
        <end position="659"/>
    </location>
</feature>
<feature type="compositionally biased region" description="Low complexity" evidence="7">
    <location>
        <begin position="729"/>
        <end position="748"/>
    </location>
</feature>
<feature type="compositionally biased region" description="Polar residues" evidence="7">
    <location>
        <begin position="749"/>
        <end position="759"/>
    </location>
</feature>
<feature type="compositionally biased region" description="Polar residues" evidence="7">
    <location>
        <begin position="829"/>
        <end position="841"/>
    </location>
</feature>
<feature type="compositionally biased region" description="Low complexity" evidence="7">
    <location>
        <begin position="857"/>
        <end position="866"/>
    </location>
</feature>
<feature type="compositionally biased region" description="Polar residues" evidence="7">
    <location>
        <begin position="868"/>
        <end position="885"/>
    </location>
</feature>
<feature type="compositionally biased region" description="Low complexity" evidence="7">
    <location>
        <begin position="886"/>
        <end position="898"/>
    </location>
</feature>
<feature type="compositionally biased region" description="Polar residues" evidence="7">
    <location>
        <begin position="899"/>
        <end position="916"/>
    </location>
</feature>
<feature type="compositionally biased region" description="Polar residues" evidence="7">
    <location>
        <begin position="929"/>
        <end position="938"/>
    </location>
</feature>
<feature type="compositionally biased region" description="Polar residues" evidence="7">
    <location>
        <begin position="959"/>
        <end position="977"/>
    </location>
</feature>
<feature type="compositionally biased region" description="Basic and acidic residues" evidence="7">
    <location>
        <begin position="986"/>
        <end position="995"/>
    </location>
</feature>
<feature type="active site" description="Proton acceptor" evidence="1 3 6">
    <location>
        <position position="292"/>
    </location>
</feature>
<feature type="binding site" evidence="1 3">
    <location>
        <begin position="176"/>
        <end position="184"/>
    </location>
    <ligand>
        <name>ATP</name>
        <dbReference type="ChEBI" id="CHEBI:30616"/>
    </ligand>
</feature>
<feature type="binding site" evidence="1 3">
    <location>
        <position position="199"/>
    </location>
    <ligand>
        <name>ATP</name>
        <dbReference type="ChEBI" id="CHEBI:30616"/>
    </ligand>
</feature>
<feature type="modified residue" description="Phosphothreonine" evidence="12">
    <location>
        <position position="325"/>
    </location>
</feature>
<feature type="splice variant" id="VSP_053634" description="In isoform i." evidence="19">
    <location>
        <begin position="1"/>
        <end position="963"/>
    </location>
</feature>
<feature type="splice variant" id="VSP_053635" description="In isoform k." evidence="19">
    <location>
        <begin position="1"/>
        <end position="598"/>
    </location>
</feature>
<feature type="splice variant" id="VSP_053636" description="In isoform h." evidence="19">
    <location>
        <begin position="1"/>
        <end position="487"/>
    </location>
</feature>
<feature type="splice variant" id="VSP_053637" description="In isoform g." evidence="19">
    <location>
        <begin position="1"/>
        <end position="151"/>
    </location>
</feature>
<feature type="splice variant" id="VSP_053140" description="In isoform c." evidence="17">
    <location>
        <begin position="1"/>
        <end position="130"/>
    </location>
</feature>
<feature type="splice variant" id="VSP_053638" description="In isoform f." evidence="19">
    <location>
        <begin position="1"/>
        <end position="89"/>
    </location>
</feature>
<feature type="splice variant" id="VSP_053639" description="In isoform l." evidence="19">
    <location>
        <begin position="1"/>
        <end position="86"/>
    </location>
</feature>
<feature type="splice variant" id="VSP_053141" description="In isoform d and isoform e." evidence="19">
    <location>
        <begin position="1"/>
        <end position="64"/>
    </location>
</feature>
<feature type="splice variant" id="VSP_053142" description="In isoform b." evidence="17 18">
    <location>
        <begin position="1"/>
        <end position="49"/>
    </location>
</feature>
<feature type="splice variant" id="VSP_053143" description="In isoform b." evidence="17 18">
    <original>NSGTRKSSGSGLKTANL</original>
    <variation>MSRVSGYFMGISKKNGQK</variation>
    <location>
        <begin position="50"/>
        <end position="66"/>
    </location>
</feature>
<feature type="splice variant" id="VSP_053144" description="In isoform d and isoform e." evidence="19">
    <original>NLKHPARPSTESSTSSSHHRRPAQEMNGTSTATATGGGGTSGATTTASSGAPAASSGGSSARYSSSGRSHPTSGS</original>
    <variation>MFNAAYSSLLARFMCQPSSSSVTPIPEEEESLIPKRKVSEVVTTAPMAPTLTSSGKRRTVKVSPDGDHVTHNRKN</variation>
    <location>
        <begin position="65"/>
        <end position="139"/>
    </location>
</feature>
<feature type="splice variant" id="VSP_053640" description="In isoform l." evidence="19">
    <original>AQEMNGTSTATATGGGGTSGATTTASSGAPAASSGGSSARYSSSGRSHPTSG</original>
    <variation>MTKKSYAFALDLDDLCCDDHPYSYSPPSTSSRHSAYYPSQQPRTFFPEYELT</variation>
    <location>
        <begin position="87"/>
        <end position="138"/>
    </location>
</feature>
<feature type="splice variant" id="VSP_053145" description="In isoform c." evidence="17">
    <original>GRSHPTSGS</original>
    <variation>MKFMWKPPD</variation>
    <location>
        <begin position="131"/>
        <end position="139"/>
    </location>
</feature>
<feature type="splice variant" id="VSP_053146" description="In isoform b." evidence="17 18">
    <location>
        <begin position="488"/>
        <end position="535"/>
    </location>
</feature>
<feature type="splice variant" id="VSP_053641" description="In isoform j." evidence="19">
    <original>S</original>
    <variation>SVSDHHHPY</variation>
    <location>
        <position position="535"/>
    </location>
</feature>
<feature type="splice variant" id="VSP_053642" description="In isoform e." evidence="19">
    <original>KPSMIHQSPSMPPSQMMTAMESLKLSESGQTGGPTVATGGPPQRATSQQMSRSATTNSANMGASSGGAAAAASATNQLSGAPSSTGASSQQYHPKAPSSSSSSSTNPPHQHQLTHNASFSVTPSSYQIPTSTAVNVTSTGMPTSSSSSAFPRNTRNRQTFHGKTEKDKGGDDSSDEIGETPGNVSIGATGPSANNAEATIWSKLSK</original>
    <variation>NPIVWQNLHLNSLLKSLLDSSAATSYETPRRPGIAGRRSEPSAATPRRRHQTMVVDARHLQTPPDTDRPYHFEDTTLDRQMRALYVSTASSRMTRGVLPTPPTSNSTSSSFIVEPLTHVAAASPDITTTTPTKSTVTTSPYFRRTPSFRMAVDDPPISINASITDDDCDGIIEIEREWSNGGTDSGDGRSTTTSHITANVSFGNNQ</variation>
    <location>
        <begin position="825"/>
        <end position="1030"/>
    </location>
</feature>
<feature type="splice variant" id="VSP_053643" description="In isoform i." evidence="19">
    <original>GMPTSSSSSAFPRNTRNRQTFHGKTEKDKGGDDSSDEIGETPGNVSIGATGPSANNAEATIWSKLSKLT</original>
    <variation>MSMTQSPSQLSSRFTSNYVAPIVRSKPPAPVSTPAAPSATAPIPVIVSPAVTKMLKENRRKLSEEAMAI</variation>
    <location>
        <begin position="964"/>
        <end position="1032"/>
    </location>
</feature>
<feature type="splice variant" id="VSP_053644" description="In isoform e." evidence="19">
    <location>
        <begin position="1031"/>
        <end position="1192"/>
    </location>
</feature>
<feature type="splice variant" id="VSP_053148" description="In isoform d." evidence="17">
    <original>R</original>
    <variation>RSSTAAAHQPRGSSLHHSMSMTQSPSQLSSRFTSNYVAPIVRSKPPAPVSTPAAPSATAPIPVIVSPAVTKMLKENRRKLSEEAMAIRR</variation>
    <location>
        <position position="1034"/>
    </location>
</feature>
<feature type="sequence conflict" description="In Ref. 1; AAA97437." evidence="19" ref="1">
    <original>R</original>
    <variation>Q</variation>
    <location>
        <position position="84"/>
    </location>
</feature>
<feature type="sequence conflict" description="In Ref. 1; AAA97437." evidence="19" ref="1">
    <original>A</original>
    <variation>P</variation>
    <location>
        <position position="96"/>
    </location>
</feature>
<feature type="sequence conflict" description="In Ref. 1; AAA97437." evidence="19" ref="1">
    <original>H</original>
    <variation>Y</variation>
    <location>
        <position position="1141"/>
    </location>
</feature>
<keyword id="KW-0025">Alternative splicing</keyword>
<keyword id="KW-0067">ATP-binding</keyword>
<keyword id="KW-0963">Cytoplasm</keyword>
<keyword id="KW-0217">Developmental protein</keyword>
<keyword id="KW-0418">Kinase</keyword>
<keyword id="KW-0460">Magnesium</keyword>
<keyword id="KW-0479">Metal-binding</keyword>
<keyword id="KW-0547">Nucleotide-binding</keyword>
<keyword id="KW-0597">Phosphoprotein</keyword>
<keyword id="KW-1185">Reference proteome</keyword>
<keyword id="KW-0723">Serine/threonine-protein kinase</keyword>
<keyword id="KW-0808">Transferase</keyword>
<dbReference type="EC" id="2.7.11.1"/>
<dbReference type="EMBL" id="U22183">
    <property type="protein sequence ID" value="AAA97437.1"/>
    <property type="molecule type" value="mRNA"/>
</dbReference>
<dbReference type="EMBL" id="U40858">
    <property type="protein sequence ID" value="AAA83272.1"/>
    <property type="molecule type" value="mRNA"/>
</dbReference>
<dbReference type="EMBL" id="Z96102">
    <property type="protein sequence ID" value="CAB54262.2"/>
    <property type="molecule type" value="Genomic_DNA"/>
</dbReference>
<dbReference type="EMBL" id="Z81027">
    <property type="protein sequence ID" value="CAB54262.2"/>
    <property type="status" value="JOINED"/>
    <property type="molecule type" value="Genomic_DNA"/>
</dbReference>
<dbReference type="EMBL" id="Z96102">
    <property type="protein sequence ID" value="CAB54263.1"/>
    <property type="molecule type" value="Genomic_DNA"/>
</dbReference>
<dbReference type="EMBL" id="Z81027">
    <property type="protein sequence ID" value="CAB54263.1"/>
    <property type="status" value="JOINED"/>
    <property type="molecule type" value="Genomic_DNA"/>
</dbReference>
<dbReference type="EMBL" id="Z96102">
    <property type="protein sequence ID" value="CAJ85756.1"/>
    <property type="molecule type" value="Genomic_DNA"/>
</dbReference>
<dbReference type="EMBL" id="Z81027">
    <property type="protein sequence ID" value="CAJ85756.1"/>
    <property type="status" value="JOINED"/>
    <property type="molecule type" value="Genomic_DNA"/>
</dbReference>
<dbReference type="EMBL" id="Z96102">
    <property type="protein sequence ID" value="CAQ16148.2"/>
    <property type="molecule type" value="Genomic_DNA"/>
</dbReference>
<dbReference type="EMBL" id="Z81027">
    <property type="protein sequence ID" value="CAQ16148.2"/>
    <property type="status" value="JOINED"/>
    <property type="molecule type" value="Genomic_DNA"/>
</dbReference>
<dbReference type="EMBL" id="Z96102">
    <property type="protein sequence ID" value="CBL43447.1"/>
    <property type="molecule type" value="Genomic_DNA"/>
</dbReference>
<dbReference type="EMBL" id="Z81027">
    <property type="protein sequence ID" value="CBL43447.1"/>
    <property type="status" value="JOINED"/>
    <property type="molecule type" value="Genomic_DNA"/>
</dbReference>
<dbReference type="EMBL" id="Z96102">
    <property type="protein sequence ID" value="CBO24859.1"/>
    <property type="molecule type" value="Genomic_DNA"/>
</dbReference>
<dbReference type="EMBL" id="Z81027">
    <property type="protein sequence ID" value="CBO24859.1"/>
    <property type="status" value="JOINED"/>
    <property type="molecule type" value="Genomic_DNA"/>
</dbReference>
<dbReference type="EMBL" id="Z96102">
    <property type="protein sequence ID" value="CBW44387.1"/>
    <property type="molecule type" value="Genomic_DNA"/>
</dbReference>
<dbReference type="EMBL" id="Z96102">
    <property type="protein sequence ID" value="CBW44388.1"/>
    <property type="molecule type" value="Genomic_DNA"/>
</dbReference>
<dbReference type="EMBL" id="Z96102">
    <property type="protein sequence ID" value="CBW48399.1"/>
    <property type="molecule type" value="Genomic_DNA"/>
</dbReference>
<dbReference type="EMBL" id="Z96102">
    <property type="protein sequence ID" value="CCE71393.1"/>
    <property type="molecule type" value="Genomic_DNA"/>
</dbReference>
<dbReference type="EMBL" id="Z96102">
    <property type="protein sequence ID" value="CCE71394.1"/>
    <property type="molecule type" value="Genomic_DNA"/>
</dbReference>
<dbReference type="EMBL" id="Z81027">
    <property type="protein sequence ID" value="CCE71394.1"/>
    <property type="status" value="JOINED"/>
    <property type="molecule type" value="Genomic_DNA"/>
</dbReference>
<dbReference type="EMBL" id="Z96102">
    <property type="protein sequence ID" value="CCW45975.1"/>
    <property type="molecule type" value="Genomic_DNA"/>
</dbReference>
<dbReference type="EMBL" id="Z81027">
    <property type="protein sequence ID" value="CCW45975.1"/>
    <property type="status" value="JOINED"/>
    <property type="molecule type" value="Genomic_DNA"/>
</dbReference>
<dbReference type="PIR" id="T18611">
    <property type="entry name" value="T18611"/>
</dbReference>
<dbReference type="RefSeq" id="NP_001024018.1">
    <molecule id="Q9TW45-1"/>
    <property type="nucleotide sequence ID" value="NM_001028847.4"/>
</dbReference>
<dbReference type="RefSeq" id="NP_001024019.1">
    <molecule id="Q9TW45-2"/>
    <property type="nucleotide sequence ID" value="NM_001028848.4"/>
</dbReference>
<dbReference type="RefSeq" id="NP_001041145.1">
    <molecule id="Q9TW45-3"/>
    <property type="nucleotide sequence ID" value="NM_001047680.4"/>
</dbReference>
<dbReference type="RefSeq" id="NP_001122967.2">
    <molecule id="Q9TW45-4"/>
    <property type="nucleotide sequence ID" value="NM_001129495.4"/>
</dbReference>
<dbReference type="RefSeq" id="NP_001256559.1">
    <molecule id="Q9TW45-6"/>
    <property type="nucleotide sequence ID" value="NM_001269630.3"/>
</dbReference>
<dbReference type="RefSeq" id="NP_001256560.1">
    <molecule id="Q9TW45-10"/>
    <property type="nucleotide sequence ID" value="NM_001269631.3"/>
</dbReference>
<dbReference type="RefSeq" id="NP_001256561.1">
    <molecule id="Q9TW45-7"/>
    <property type="nucleotide sequence ID" value="NM_001269632.3"/>
</dbReference>
<dbReference type="RefSeq" id="NP_001256562.1">
    <molecule id="Q9TW45-8"/>
    <property type="nucleotide sequence ID" value="NM_001269633.3"/>
</dbReference>
<dbReference type="RefSeq" id="NP_001256563.1">
    <molecule id="Q9TW45-11"/>
    <property type="nucleotide sequence ID" value="NM_001269634.3"/>
</dbReference>
<dbReference type="RefSeq" id="NP_001256564.1">
    <molecule id="Q9TW45-9"/>
    <property type="nucleotide sequence ID" value="NM_001269635.3"/>
</dbReference>
<dbReference type="RefSeq" id="NP_001256565.1">
    <property type="nucleotide sequence ID" value="NM_001269636.1"/>
</dbReference>
<dbReference type="RefSeq" id="NP_001294690.1">
    <molecule id="Q9TW45-12"/>
    <property type="nucleotide sequence ID" value="NM_001307761.3"/>
</dbReference>
<dbReference type="RefSeq" id="NP_001359744.1">
    <molecule id="Q9TW45-5"/>
    <property type="nucleotide sequence ID" value="NM_001373155.1"/>
</dbReference>
<dbReference type="SMR" id="Q9TW45"/>
<dbReference type="BioGRID" id="44918">
    <property type="interactions" value="14"/>
</dbReference>
<dbReference type="FunCoup" id="Q9TW45">
    <property type="interactions" value="2066"/>
</dbReference>
<dbReference type="IntAct" id="Q9TW45">
    <property type="interactions" value="2"/>
</dbReference>
<dbReference type="STRING" id="6239.H39E23.1d.1"/>
<dbReference type="iPTMnet" id="Q9TW45"/>
<dbReference type="PaxDb" id="6239-H39E23.1d"/>
<dbReference type="PeptideAtlas" id="Q9TW45"/>
<dbReference type="EnsemblMetazoa" id="H39E23.1a.1">
    <molecule id="Q9TW45-1"/>
    <property type="protein sequence ID" value="H39E23.1a.1"/>
    <property type="gene ID" value="WBGene00003916"/>
</dbReference>
<dbReference type="EnsemblMetazoa" id="H39E23.1b.1">
    <molecule id="Q9TW45-2"/>
    <property type="protein sequence ID" value="H39E23.1b.1"/>
    <property type="gene ID" value="WBGene00003916"/>
</dbReference>
<dbReference type="EnsemblMetazoa" id="H39E23.1c.1">
    <molecule id="Q9TW45-3"/>
    <property type="protein sequence ID" value="H39E23.1c.1"/>
    <property type="gene ID" value="WBGene00003916"/>
</dbReference>
<dbReference type="EnsemblMetazoa" id="H39E23.1d.1">
    <molecule id="Q9TW45-4"/>
    <property type="protein sequence ID" value="H39E23.1d.1"/>
    <property type="gene ID" value="WBGene00003916"/>
</dbReference>
<dbReference type="EnsemblMetazoa" id="H39E23.1e.1">
    <molecule id="Q9TW45-5"/>
    <property type="protein sequence ID" value="H39E23.1e.1"/>
    <property type="gene ID" value="WBGene00003916"/>
</dbReference>
<dbReference type="EnsemblMetazoa" id="H39E23.1e.2">
    <molecule id="Q9TW45-5"/>
    <property type="protein sequence ID" value="H39E23.1e.2"/>
    <property type="gene ID" value="WBGene00003916"/>
</dbReference>
<dbReference type="EnsemblMetazoa" id="H39E23.1e.3">
    <molecule id="Q9TW45-5"/>
    <property type="protein sequence ID" value="H39E23.1e.3"/>
    <property type="gene ID" value="WBGene00003916"/>
</dbReference>
<dbReference type="EnsemblMetazoa" id="H39E23.1e.4">
    <molecule id="Q9TW45-5"/>
    <property type="protein sequence ID" value="H39E23.1e.4"/>
    <property type="gene ID" value="WBGene00003916"/>
</dbReference>
<dbReference type="EnsemblMetazoa" id="H39E23.1e.5">
    <molecule id="Q9TW45-5"/>
    <property type="protein sequence ID" value="H39E23.1e.5"/>
    <property type="gene ID" value="WBGene00003916"/>
</dbReference>
<dbReference type="EnsemblMetazoa" id="H39E23.1e.6">
    <molecule id="Q9TW45-5"/>
    <property type="protein sequence ID" value="H39E23.1e.6"/>
    <property type="gene ID" value="WBGene00003916"/>
</dbReference>
<dbReference type="EnsemblMetazoa" id="H39E23.1f.1">
    <molecule id="Q9TW45-6"/>
    <property type="protein sequence ID" value="H39E23.1f.1"/>
    <property type="gene ID" value="WBGene00003916"/>
</dbReference>
<dbReference type="EnsemblMetazoa" id="H39E23.1g.1">
    <molecule id="Q9TW45-7"/>
    <property type="protein sequence ID" value="H39E23.1g.1"/>
    <property type="gene ID" value="WBGene00003916"/>
</dbReference>
<dbReference type="EnsemblMetazoa" id="H39E23.1h.1">
    <molecule id="Q9TW45-8"/>
    <property type="protein sequence ID" value="H39E23.1h.1"/>
    <property type="gene ID" value="WBGene00003916"/>
</dbReference>
<dbReference type="EnsemblMetazoa" id="H39E23.1i.1">
    <molecule id="Q9TW45-9"/>
    <property type="protein sequence ID" value="H39E23.1i.1"/>
    <property type="gene ID" value="WBGene00003916"/>
</dbReference>
<dbReference type="EnsemblMetazoa" id="H39E23.1j.1">
    <molecule id="Q9TW45-10"/>
    <property type="protein sequence ID" value="H39E23.1j.1"/>
    <property type="gene ID" value="WBGene00003916"/>
</dbReference>
<dbReference type="EnsemblMetazoa" id="H39E23.1k.1">
    <molecule id="Q9TW45-11"/>
    <property type="protein sequence ID" value="H39E23.1k.1"/>
    <property type="gene ID" value="WBGene00003916"/>
</dbReference>
<dbReference type="EnsemblMetazoa" id="H39E23.1l.1">
    <molecule id="Q9TW45-12"/>
    <property type="protein sequence ID" value="H39E23.1l.1"/>
    <property type="gene ID" value="WBGene00003916"/>
</dbReference>
<dbReference type="GeneID" id="179912"/>
<dbReference type="KEGG" id="cel:CELE_H39E23.1"/>
<dbReference type="UCSC" id="H39E23.1b">
    <property type="organism name" value="c. elegans"/>
</dbReference>
<dbReference type="AGR" id="WB:WBGene00003916"/>
<dbReference type="CTD" id="2768852"/>
<dbReference type="WormBase" id="H39E23.1a">
    <molecule id="Q9TW45-1"/>
    <property type="protein sequence ID" value="CE23838"/>
    <property type="gene ID" value="WBGene00003916"/>
    <property type="gene designation" value="par-1"/>
</dbReference>
<dbReference type="WormBase" id="H39E23.1b">
    <molecule id="Q9TW45-2"/>
    <property type="protein sequence ID" value="CE27768"/>
    <property type="gene ID" value="WBGene00003916"/>
    <property type="gene designation" value="par-1"/>
</dbReference>
<dbReference type="WormBase" id="H39E23.1c">
    <molecule id="Q9TW45-3"/>
    <property type="protein sequence ID" value="CE40085"/>
    <property type="gene ID" value="WBGene00003916"/>
    <property type="gene designation" value="par-1"/>
</dbReference>
<dbReference type="WormBase" id="H39E23.1d">
    <molecule id="Q9TW45-4"/>
    <property type="protein sequence ID" value="CE44808"/>
    <property type="gene ID" value="WBGene00003916"/>
    <property type="gene designation" value="par-1"/>
</dbReference>
<dbReference type="WormBase" id="H39E23.1e">
    <molecule id="Q9TW45-5"/>
    <property type="protein sequence ID" value="CE44733"/>
    <property type="gene ID" value="WBGene00003916"/>
    <property type="gene designation" value="par-1"/>
</dbReference>
<dbReference type="WormBase" id="H39E23.1f">
    <molecule id="Q9TW45-6"/>
    <property type="protein sequence ID" value="CE45159"/>
    <property type="gene ID" value="WBGene00003916"/>
    <property type="gene designation" value="par-1"/>
</dbReference>
<dbReference type="WormBase" id="H39E23.1g">
    <molecule id="Q9TW45-7"/>
    <property type="protein sequence ID" value="CE45263"/>
    <property type="gene ID" value="WBGene00003916"/>
    <property type="gene designation" value="par-1"/>
</dbReference>
<dbReference type="WormBase" id="H39E23.1h">
    <molecule id="Q9TW45-8"/>
    <property type="protein sequence ID" value="CE45267"/>
    <property type="gene ID" value="WBGene00003916"/>
    <property type="gene designation" value="par-1"/>
</dbReference>
<dbReference type="WormBase" id="H39E23.1i">
    <molecule id="Q9TW45-9"/>
    <property type="protein sequence ID" value="CE45299"/>
    <property type="gene ID" value="WBGene00003916"/>
    <property type="gene designation" value="par-1"/>
</dbReference>
<dbReference type="WormBase" id="H39E23.1j">
    <molecule id="Q9TW45-10"/>
    <property type="protein sequence ID" value="CE46555"/>
    <property type="gene ID" value="WBGene00003916"/>
    <property type="gene designation" value="par-1"/>
</dbReference>
<dbReference type="WormBase" id="H39E23.1k">
    <molecule id="Q9TW45-11"/>
    <property type="protein sequence ID" value="CE46628"/>
    <property type="gene ID" value="WBGene00003916"/>
    <property type="gene designation" value="par-1"/>
</dbReference>
<dbReference type="WormBase" id="H39E23.1l">
    <molecule id="Q9TW45-12"/>
    <property type="protein sequence ID" value="CE48381"/>
    <property type="gene ID" value="WBGene00003916"/>
    <property type="gene designation" value="par-1"/>
</dbReference>
<dbReference type="eggNOG" id="KOG0586">
    <property type="taxonomic scope" value="Eukaryota"/>
</dbReference>
<dbReference type="GeneTree" id="ENSGT00940000160886"/>
<dbReference type="InParanoid" id="Q9TW45"/>
<dbReference type="OMA" id="AVEMIAC"/>
<dbReference type="OrthoDB" id="193931at2759"/>
<dbReference type="PhylomeDB" id="Q9TW45"/>
<dbReference type="Reactome" id="R-CEL-5673000">
    <property type="pathway name" value="RAF activation"/>
</dbReference>
<dbReference type="Reactome" id="R-CEL-5674135">
    <property type="pathway name" value="MAP2K and MAPK activation"/>
</dbReference>
<dbReference type="Reactome" id="R-CEL-5675221">
    <property type="pathway name" value="Negative regulation of MAPK pathway"/>
</dbReference>
<dbReference type="Reactome" id="R-CEL-9856649">
    <property type="pathway name" value="Transcriptional and post-translational regulation of MITF-M expression and activity"/>
</dbReference>
<dbReference type="SignaLink" id="Q9TW45"/>
<dbReference type="CD-CODE" id="73A75392">
    <property type="entry name" value="P-granule"/>
</dbReference>
<dbReference type="PRO" id="PR:Q9TW45"/>
<dbReference type="Proteomes" id="UP000001940">
    <property type="component" value="Chromosome V"/>
</dbReference>
<dbReference type="Bgee" id="WBGene00003916">
    <property type="expression patterns" value="Expressed in pharyngeal muscle cell (C elegans) and 4 other cell types or tissues"/>
</dbReference>
<dbReference type="ExpressionAtlas" id="Q9TW45">
    <property type="expression patterns" value="baseline and differential"/>
</dbReference>
<dbReference type="GO" id="GO:0005938">
    <property type="term" value="C:cell cortex"/>
    <property type="evidence" value="ECO:0000314"/>
    <property type="project" value="UniProtKB"/>
</dbReference>
<dbReference type="GO" id="GO:0071944">
    <property type="term" value="C:cell periphery"/>
    <property type="evidence" value="ECO:0000314"/>
    <property type="project" value="WormBase"/>
</dbReference>
<dbReference type="GO" id="GO:0005737">
    <property type="term" value="C:cytoplasm"/>
    <property type="evidence" value="ECO:0000314"/>
    <property type="project" value="WormBase"/>
</dbReference>
<dbReference type="GO" id="GO:0043186">
    <property type="term" value="C:P granule"/>
    <property type="evidence" value="ECO:0000314"/>
    <property type="project" value="UniProtKB"/>
</dbReference>
<dbReference type="GO" id="GO:0005524">
    <property type="term" value="F:ATP binding"/>
    <property type="evidence" value="ECO:0007669"/>
    <property type="project" value="UniProtKB-KW"/>
</dbReference>
<dbReference type="GO" id="GO:0046872">
    <property type="term" value="F:metal ion binding"/>
    <property type="evidence" value="ECO:0007669"/>
    <property type="project" value="UniProtKB-KW"/>
</dbReference>
<dbReference type="GO" id="GO:0032035">
    <property type="term" value="F:myosin II tail binding"/>
    <property type="evidence" value="ECO:0000353"/>
    <property type="project" value="WormBase"/>
</dbReference>
<dbReference type="GO" id="GO:0106310">
    <property type="term" value="F:protein serine kinase activity"/>
    <property type="evidence" value="ECO:0007669"/>
    <property type="project" value="RHEA"/>
</dbReference>
<dbReference type="GO" id="GO:0004674">
    <property type="term" value="F:protein serine/threonine kinase activity"/>
    <property type="evidence" value="ECO:0000314"/>
    <property type="project" value="WormBase"/>
</dbReference>
<dbReference type="GO" id="GO:0050321">
    <property type="term" value="F:tau-protein kinase activity"/>
    <property type="evidence" value="ECO:0000318"/>
    <property type="project" value="GO_Central"/>
</dbReference>
<dbReference type="GO" id="GO:0031625">
    <property type="term" value="F:ubiquitin protein ligase binding"/>
    <property type="evidence" value="ECO:0000353"/>
    <property type="project" value="WormBase"/>
</dbReference>
<dbReference type="GO" id="GO:0055059">
    <property type="term" value="P:asymmetric neuroblast division"/>
    <property type="evidence" value="ECO:0000316"/>
    <property type="project" value="WormBase"/>
</dbReference>
<dbReference type="GO" id="GO:0045167">
    <property type="term" value="P:asymmetric protein localization involved in cell fate determination"/>
    <property type="evidence" value="ECO:0000315"/>
    <property type="project" value="WormBase"/>
</dbReference>
<dbReference type="GO" id="GO:0009880">
    <property type="term" value="P:embryonic pattern specification"/>
    <property type="evidence" value="ECO:0000315"/>
    <property type="project" value="WormBase"/>
</dbReference>
<dbReference type="GO" id="GO:0030010">
    <property type="term" value="P:establishment of cell polarity"/>
    <property type="evidence" value="ECO:0000315"/>
    <property type="project" value="WormBase"/>
</dbReference>
<dbReference type="GO" id="GO:0007163">
    <property type="term" value="P:establishment or maintenance of cell polarity"/>
    <property type="evidence" value="ECO:0000315"/>
    <property type="project" value="WormBase"/>
</dbReference>
<dbReference type="GO" id="GO:0035556">
    <property type="term" value="P:intracellular signal transduction"/>
    <property type="evidence" value="ECO:0000318"/>
    <property type="project" value="GO_Central"/>
</dbReference>
<dbReference type="GO" id="GO:0000226">
    <property type="term" value="P:microtubule cytoskeleton organization"/>
    <property type="evidence" value="ECO:0000318"/>
    <property type="project" value="GO_Central"/>
</dbReference>
<dbReference type="GO" id="GO:0009949">
    <property type="term" value="P:polarity specification of anterior/posterior axis"/>
    <property type="evidence" value="ECO:0000304"/>
    <property type="project" value="WormBase"/>
</dbReference>
<dbReference type="GO" id="GO:0040025">
    <property type="term" value="P:vulval development"/>
    <property type="evidence" value="ECO:0000315"/>
    <property type="project" value="WormBase"/>
</dbReference>
<dbReference type="CDD" id="cd12196">
    <property type="entry name" value="MARK1-3_C"/>
    <property type="match status" value="1"/>
</dbReference>
<dbReference type="CDD" id="cd14072">
    <property type="entry name" value="STKc_MARK"/>
    <property type="match status" value="1"/>
</dbReference>
<dbReference type="CDD" id="cd14337">
    <property type="entry name" value="UBA_MARK_Par1"/>
    <property type="match status" value="1"/>
</dbReference>
<dbReference type="FunFam" id="1.10.510.10:FF:001032">
    <property type="entry name" value="KP78b, isoform A"/>
    <property type="match status" value="1"/>
</dbReference>
<dbReference type="FunFam" id="3.30.200.20:FF:000003">
    <property type="entry name" value="Non-specific serine/threonine protein kinase"/>
    <property type="match status" value="1"/>
</dbReference>
<dbReference type="FunFam" id="3.30.310.80:FF:000001">
    <property type="entry name" value="Non-specific serine/threonine protein kinase"/>
    <property type="match status" value="1"/>
</dbReference>
<dbReference type="Gene3D" id="1.10.8.10">
    <property type="entry name" value="DNA helicase RuvA subunit, C-terminal domain"/>
    <property type="match status" value="1"/>
</dbReference>
<dbReference type="Gene3D" id="3.30.310.80">
    <property type="entry name" value="Kinase associated domain 1, KA1"/>
    <property type="match status" value="1"/>
</dbReference>
<dbReference type="Gene3D" id="3.30.200.20">
    <property type="entry name" value="Phosphorylase Kinase, domain 1"/>
    <property type="match status" value="1"/>
</dbReference>
<dbReference type="Gene3D" id="1.10.510.10">
    <property type="entry name" value="Transferase(Phosphotransferase) domain 1"/>
    <property type="match status" value="1"/>
</dbReference>
<dbReference type="InterPro" id="IPR028375">
    <property type="entry name" value="KA1/Ssp2_C"/>
</dbReference>
<dbReference type="InterPro" id="IPR001772">
    <property type="entry name" value="KA1_dom"/>
</dbReference>
<dbReference type="InterPro" id="IPR011009">
    <property type="entry name" value="Kinase-like_dom_sf"/>
</dbReference>
<dbReference type="InterPro" id="IPR049508">
    <property type="entry name" value="MARK1-4_cat"/>
</dbReference>
<dbReference type="InterPro" id="IPR000719">
    <property type="entry name" value="Prot_kinase_dom"/>
</dbReference>
<dbReference type="InterPro" id="IPR017441">
    <property type="entry name" value="Protein_kinase_ATP_BS"/>
</dbReference>
<dbReference type="InterPro" id="IPR008271">
    <property type="entry name" value="Ser/Thr_kinase_AS"/>
</dbReference>
<dbReference type="InterPro" id="IPR015940">
    <property type="entry name" value="UBA"/>
</dbReference>
<dbReference type="PANTHER" id="PTHR24346:SF82">
    <property type="entry name" value="KP78A-RELATED"/>
    <property type="match status" value="1"/>
</dbReference>
<dbReference type="PANTHER" id="PTHR24346">
    <property type="entry name" value="MAP/MICROTUBULE AFFINITY-REGULATING KINASE"/>
    <property type="match status" value="1"/>
</dbReference>
<dbReference type="Pfam" id="PF02149">
    <property type="entry name" value="KA1"/>
    <property type="match status" value="1"/>
</dbReference>
<dbReference type="Pfam" id="PF00069">
    <property type="entry name" value="Pkinase"/>
    <property type="match status" value="1"/>
</dbReference>
<dbReference type="SMART" id="SM00220">
    <property type="entry name" value="S_TKc"/>
    <property type="match status" value="1"/>
</dbReference>
<dbReference type="SUPFAM" id="SSF103243">
    <property type="entry name" value="KA1-like"/>
    <property type="match status" value="1"/>
</dbReference>
<dbReference type="SUPFAM" id="SSF56112">
    <property type="entry name" value="Protein kinase-like (PK-like)"/>
    <property type="match status" value="1"/>
</dbReference>
<dbReference type="PROSITE" id="PS50032">
    <property type="entry name" value="KA1"/>
    <property type="match status" value="1"/>
</dbReference>
<dbReference type="PROSITE" id="PS00107">
    <property type="entry name" value="PROTEIN_KINASE_ATP"/>
    <property type="match status" value="1"/>
</dbReference>
<dbReference type="PROSITE" id="PS50011">
    <property type="entry name" value="PROTEIN_KINASE_DOM"/>
    <property type="match status" value="1"/>
</dbReference>
<dbReference type="PROSITE" id="PS00108">
    <property type="entry name" value="PROTEIN_KINASE_ST"/>
    <property type="match status" value="1"/>
</dbReference>
<dbReference type="PROSITE" id="PS50030">
    <property type="entry name" value="UBA"/>
    <property type="match status" value="1"/>
</dbReference>
<sequence length="1192" mass="126349">MSSASVGKKPEHVNTPPGDNQQKSSKENQKSNKDKQSSNQPPGQIPHSTNSGTRKSSGSGLKTANLKHPARPSTESSTSSSHHRRPAQEMNGTSTATATGGGGTSGATTTASSGAPAASSGGSSARYSSSGRSHPTSGSSSSHARSTGQSGMSSRSAARRNDQDVHVGKYKLLKTIGKGNFAKVKLAKHVITGHEVAIKIIDKTALNPSSLQKLFREVKIMKQLDHPNIVKLYQVMETEQTLYLVLEYASGGEVFDYLVAHGRMKEKEARAKFRQIVSAVQYLHSKNIIHRDLKAENLLLDQDMNIKIADFGFSNTFSLGNKLDTFCGSPPYAAPELFSGKKYDGPEVDVWSLGVILYTLVSGSLPFDGQNLKELRERVLRGKYRIPFYMSTDCENLLKKFLVINPQRRSSLDNIMKDRWMNVGYEDDELKPFIEPPKDQIDEQRIEKLIQIFQLGFNKAAILESVEKEKFEDIHATYLLLGERKSDMDASEITMAQSLLSHSSINVSSSLGQHPAGVITREHVTSSSASGSSASPSRYSRSSATATGASITAGSALASAANAQKHQQSSAAPSSGSSSSRRSSQNDAAATAAGGTVVMSGTRHGGVQMRAQPTSRQATISLLQPPSYKPSSNTTQIAQIPPLFNRNSTATSSAAQPSTGITGTRKIADPKGRIPLNSTAVQGHRTATGAVAANNGGIPSHRDHAQQQQYMNQLTSSTMMSKLINKTPAAGGTAATSSSSSSSATSTAPLQKSGSQISHAPTEPVIREDDDENNSENQNGNVPLIGGVGPQTSPAVQVPTEDATSSSDKEQQQQKASSETPKESKPSMIHQSPSMPPSQMMTAMESLKLSESGQTGGPTVATGGPPQRATSQQMSRSATTNSANMGASSGGAAAAASATNQLSGAPSSTGASSQQYHPKAPSSSSSSSTNPPHQHQLTHNASFSVTPSSYQIPTSTAVNVTSTGMPTSSSSSAFPRNTRNRQTFHGKTEKDKGGDDSSDEIGETPGNVSIGATGPSANNAEATIWSKLSKLTRRDHNRESMTQPVSGRAGTIGASQGQQTAAALAAIREQSGPIAPGAGQVAPSLPIHEGDVKPRSLRFTWSMKTTSSLAPDDMMREIRKVLDANGCDYEQRERYMILCVHGDPNTDSLVQWEMEVCKLPRLSLNGVRFKRISGTSIGFKNIASKIAQELNL</sequence>